<dbReference type="EC" id="3.6.5.-"/>
<dbReference type="EMBL" id="HE600963">
    <property type="protein sequence ID" value="CAP35641.1"/>
    <property type="molecule type" value="Genomic_DNA"/>
</dbReference>
<dbReference type="RefSeq" id="XP_002642172.1">
    <property type="nucleotide sequence ID" value="XM_002642126.1"/>
</dbReference>
<dbReference type="SMR" id="A8XT37"/>
<dbReference type="FunCoup" id="A8XT37">
    <property type="interactions" value="2752"/>
</dbReference>
<dbReference type="STRING" id="6238.A8XT37"/>
<dbReference type="EnsemblMetazoa" id="CBG18137.1">
    <property type="protein sequence ID" value="CBG18137.1"/>
    <property type="gene ID" value="WBGene00037611"/>
</dbReference>
<dbReference type="GeneID" id="8584168"/>
<dbReference type="KEGG" id="cbr:CBG_18137"/>
<dbReference type="CTD" id="8584168"/>
<dbReference type="WormBase" id="CBG18137">
    <property type="protein sequence ID" value="CBP04249"/>
    <property type="gene ID" value="WBGene00037611"/>
</dbReference>
<dbReference type="eggNOG" id="KOG0462">
    <property type="taxonomic scope" value="Eukaryota"/>
</dbReference>
<dbReference type="HOGENOM" id="CLU_009995_3_3_1"/>
<dbReference type="InParanoid" id="A8XT37"/>
<dbReference type="OMA" id="QVKCDEN"/>
<dbReference type="Proteomes" id="UP000008549">
    <property type="component" value="Unassembled WGS sequence"/>
</dbReference>
<dbReference type="GO" id="GO:0005743">
    <property type="term" value="C:mitochondrial inner membrane"/>
    <property type="evidence" value="ECO:0007669"/>
    <property type="project" value="UniProtKB-SubCell"/>
</dbReference>
<dbReference type="GO" id="GO:0005759">
    <property type="term" value="C:mitochondrial matrix"/>
    <property type="evidence" value="ECO:0007669"/>
    <property type="project" value="UniProtKB-UniRule"/>
</dbReference>
<dbReference type="GO" id="GO:0005739">
    <property type="term" value="C:mitochondrion"/>
    <property type="evidence" value="ECO:0000318"/>
    <property type="project" value="GO_Central"/>
</dbReference>
<dbReference type="GO" id="GO:0005525">
    <property type="term" value="F:GTP binding"/>
    <property type="evidence" value="ECO:0007669"/>
    <property type="project" value="UniProtKB-UniRule"/>
</dbReference>
<dbReference type="GO" id="GO:0003924">
    <property type="term" value="F:GTPase activity"/>
    <property type="evidence" value="ECO:0007669"/>
    <property type="project" value="UniProtKB-UniRule"/>
</dbReference>
<dbReference type="GO" id="GO:0097177">
    <property type="term" value="F:mitochondrial ribosome binding"/>
    <property type="evidence" value="ECO:0000318"/>
    <property type="project" value="GO_Central"/>
</dbReference>
<dbReference type="GO" id="GO:0045727">
    <property type="term" value="P:positive regulation of translation"/>
    <property type="evidence" value="ECO:0000318"/>
    <property type="project" value="GO_Central"/>
</dbReference>
<dbReference type="GO" id="GO:0006412">
    <property type="term" value="P:translation"/>
    <property type="evidence" value="ECO:0007669"/>
    <property type="project" value="UniProtKB-KW"/>
</dbReference>
<dbReference type="CDD" id="cd03699">
    <property type="entry name" value="EF4_II"/>
    <property type="match status" value="1"/>
</dbReference>
<dbReference type="CDD" id="cd16260">
    <property type="entry name" value="EF4_III"/>
    <property type="match status" value="1"/>
</dbReference>
<dbReference type="CDD" id="cd01890">
    <property type="entry name" value="LepA"/>
    <property type="match status" value="1"/>
</dbReference>
<dbReference type="CDD" id="cd03709">
    <property type="entry name" value="lepA_C"/>
    <property type="match status" value="1"/>
</dbReference>
<dbReference type="FunFam" id="3.30.70.240:FF:000028">
    <property type="entry name" value="Translation factor GUF1 homolog, mitochondrial"/>
    <property type="match status" value="1"/>
</dbReference>
<dbReference type="FunFam" id="3.40.50.300:FF:001496">
    <property type="entry name" value="Translation factor GUF1 homolog, mitochondrial"/>
    <property type="match status" value="1"/>
</dbReference>
<dbReference type="FunFam" id="2.40.30.10:FF:000015">
    <property type="entry name" value="Translation factor GUF1, mitochondrial"/>
    <property type="match status" value="1"/>
</dbReference>
<dbReference type="FunFam" id="3.30.70.870:FF:000004">
    <property type="entry name" value="Translation factor GUF1, mitochondrial"/>
    <property type="match status" value="1"/>
</dbReference>
<dbReference type="Gene3D" id="3.30.70.240">
    <property type="match status" value="1"/>
</dbReference>
<dbReference type="Gene3D" id="3.30.70.2570">
    <property type="entry name" value="Elongation factor 4, C-terminal domain"/>
    <property type="match status" value="1"/>
</dbReference>
<dbReference type="Gene3D" id="3.30.70.870">
    <property type="entry name" value="Elongation Factor G (Translational Gtpase), domain 3"/>
    <property type="match status" value="1"/>
</dbReference>
<dbReference type="Gene3D" id="3.40.50.300">
    <property type="entry name" value="P-loop containing nucleotide triphosphate hydrolases"/>
    <property type="match status" value="1"/>
</dbReference>
<dbReference type="Gene3D" id="2.40.30.10">
    <property type="entry name" value="Translation factors"/>
    <property type="match status" value="1"/>
</dbReference>
<dbReference type="HAMAP" id="MF_00071">
    <property type="entry name" value="LepA"/>
    <property type="match status" value="1"/>
</dbReference>
<dbReference type="InterPro" id="IPR006297">
    <property type="entry name" value="EF-4"/>
</dbReference>
<dbReference type="InterPro" id="IPR035647">
    <property type="entry name" value="EFG_III/V"/>
</dbReference>
<dbReference type="InterPro" id="IPR000640">
    <property type="entry name" value="EFG_V-like"/>
</dbReference>
<dbReference type="InterPro" id="IPR004161">
    <property type="entry name" value="EFTu-like_2"/>
</dbReference>
<dbReference type="InterPro" id="IPR031157">
    <property type="entry name" value="G_TR_CS"/>
</dbReference>
<dbReference type="InterPro" id="IPR038363">
    <property type="entry name" value="LepA_C_sf"/>
</dbReference>
<dbReference type="InterPro" id="IPR013842">
    <property type="entry name" value="LepA_CTD"/>
</dbReference>
<dbReference type="InterPro" id="IPR035654">
    <property type="entry name" value="LepA_IV"/>
</dbReference>
<dbReference type="InterPro" id="IPR027417">
    <property type="entry name" value="P-loop_NTPase"/>
</dbReference>
<dbReference type="InterPro" id="IPR005225">
    <property type="entry name" value="Small_GTP-bd"/>
</dbReference>
<dbReference type="InterPro" id="IPR000795">
    <property type="entry name" value="T_Tr_GTP-bd_dom"/>
</dbReference>
<dbReference type="InterPro" id="IPR009000">
    <property type="entry name" value="Transl_B-barrel_sf"/>
</dbReference>
<dbReference type="NCBIfam" id="TIGR01393">
    <property type="entry name" value="lepA"/>
    <property type="match status" value="1"/>
</dbReference>
<dbReference type="NCBIfam" id="TIGR00231">
    <property type="entry name" value="small_GTP"/>
    <property type="match status" value="1"/>
</dbReference>
<dbReference type="PANTHER" id="PTHR43512:SF7">
    <property type="entry name" value="TRANSLATION FACTOR GUF1, MITOCHONDRIAL"/>
    <property type="match status" value="1"/>
</dbReference>
<dbReference type="PANTHER" id="PTHR43512">
    <property type="entry name" value="TRANSLATION FACTOR GUF1-RELATED"/>
    <property type="match status" value="1"/>
</dbReference>
<dbReference type="Pfam" id="PF00679">
    <property type="entry name" value="EFG_C"/>
    <property type="match status" value="1"/>
</dbReference>
<dbReference type="Pfam" id="PF00009">
    <property type="entry name" value="GTP_EFTU"/>
    <property type="match status" value="1"/>
</dbReference>
<dbReference type="Pfam" id="PF03144">
    <property type="entry name" value="GTP_EFTU_D2"/>
    <property type="match status" value="1"/>
</dbReference>
<dbReference type="Pfam" id="PF06421">
    <property type="entry name" value="LepA_C"/>
    <property type="match status" value="1"/>
</dbReference>
<dbReference type="PRINTS" id="PR00315">
    <property type="entry name" value="ELONGATNFCT"/>
</dbReference>
<dbReference type="SMART" id="SM00838">
    <property type="entry name" value="EFG_C"/>
    <property type="match status" value="1"/>
</dbReference>
<dbReference type="SUPFAM" id="SSF54980">
    <property type="entry name" value="EF-G C-terminal domain-like"/>
    <property type="match status" value="2"/>
</dbReference>
<dbReference type="SUPFAM" id="SSF52540">
    <property type="entry name" value="P-loop containing nucleoside triphosphate hydrolases"/>
    <property type="match status" value="1"/>
</dbReference>
<dbReference type="SUPFAM" id="SSF50447">
    <property type="entry name" value="Translation proteins"/>
    <property type="match status" value="1"/>
</dbReference>
<dbReference type="PROSITE" id="PS00301">
    <property type="entry name" value="G_TR_1"/>
    <property type="match status" value="1"/>
</dbReference>
<dbReference type="PROSITE" id="PS51722">
    <property type="entry name" value="G_TR_2"/>
    <property type="match status" value="1"/>
</dbReference>
<sequence>MNRQRLLKIWCLKKLGETHRCYSSAGDPTKLINFSEFTPEKIRNFGIVAHVDHGKSTLADRLLELCGAVPPGQQQMLDKLQVERERGITVKAQTAALKYQGYLLNLIDTPGHVDFSAEVSRSLAVCDGILLLVAANQGVQAQTIANFWLAFEKNIQIIPVINKIDLPGADIKSVETQLKNLFEFNSEECLHISAKSGLNVEKVLDAIVERVPAPTANVEAPFRAMIFDSYFDHFRGAIAHIVVKEGSVKKGDKIRSYQNDKSYDVSEVGVMRPEMVKCTEVRAGQVGYLVCNMRTVKEAVVGETLFAAETPKESVQSFAEIKGVKATVYAGLFPVETADYESLKQAVERLCLNDPSVTVTPDASKALGLGWRIGFLGVLHMEVFGARLSQEYDASVILCQPSVEYRAKIKDNENIRKKRYDGMEEVRILDPSKFPEESDVDSFLEPMVKVRMIVPNEMMGTVNGLCSECRGERGEISSIDTSRLMILWRLPLAEVAVDFFERLKKLTSGYASFDYEPDGWQETRLVKLTILINGKEVSEFSQILPAAMARDRAKTLVQRLKREIPRQQFEVTIKACIGSSTKALSQIVIQPMKRDFSQLLKGNFGGGGMERLNKKLSHQKKGKERMKMVGNIQIPKEAFLNVLKN</sequence>
<protein>
    <recommendedName>
        <fullName evidence="1">Translation factor GUF1 homolog, mitochondrial</fullName>
        <ecNumber>3.6.5.-</ecNumber>
    </recommendedName>
    <alternativeName>
        <fullName evidence="1">Elongation factor 4 homolog</fullName>
        <shortName evidence="1">EF-4</shortName>
    </alternativeName>
    <alternativeName>
        <fullName evidence="1">GTPase GUF1 homolog</fullName>
    </alternativeName>
    <alternativeName>
        <fullName evidence="1">Ribosomal back-translocase</fullName>
    </alternativeName>
</protein>
<feature type="chain" id="PRO_0000402841" description="Translation factor GUF1 homolog, mitochondrial">
    <location>
        <begin position="1"/>
        <end position="645"/>
    </location>
</feature>
<feature type="domain" description="tr-type G">
    <location>
        <begin position="40"/>
        <end position="215"/>
    </location>
</feature>
<feature type="binding site" evidence="1">
    <location>
        <begin position="49"/>
        <end position="56"/>
    </location>
    <ligand>
        <name>GTP</name>
        <dbReference type="ChEBI" id="CHEBI:37565"/>
    </ligand>
</feature>
<feature type="binding site" evidence="1">
    <location>
        <begin position="108"/>
        <end position="112"/>
    </location>
    <ligand>
        <name>GTP</name>
        <dbReference type="ChEBI" id="CHEBI:37565"/>
    </ligand>
</feature>
<feature type="binding site" evidence="1">
    <location>
        <begin position="162"/>
        <end position="165"/>
    </location>
    <ligand>
        <name>GTP</name>
        <dbReference type="ChEBI" id="CHEBI:37565"/>
    </ligand>
</feature>
<comment type="function">
    <text evidence="1">Promotes mitochondrial protein synthesis. May act as a fidelity factor of the translation reaction, by catalyzing a one-codon backward translocation of tRNAs on improperly translocated ribosomes. Binds to mitochondrial ribosomes in a GTP-dependent manner.</text>
</comment>
<comment type="catalytic activity">
    <reaction evidence="1">
        <text>GTP + H2O = GDP + phosphate + H(+)</text>
        <dbReference type="Rhea" id="RHEA:19669"/>
        <dbReference type="ChEBI" id="CHEBI:15377"/>
        <dbReference type="ChEBI" id="CHEBI:15378"/>
        <dbReference type="ChEBI" id="CHEBI:37565"/>
        <dbReference type="ChEBI" id="CHEBI:43474"/>
        <dbReference type="ChEBI" id="CHEBI:58189"/>
    </reaction>
</comment>
<comment type="subcellular location">
    <subcellularLocation>
        <location evidence="1">Mitochondrion inner membrane</location>
        <topology evidence="1">Peripheral membrane protein</topology>
        <orientation evidence="1">Matrix side</orientation>
    </subcellularLocation>
</comment>
<comment type="miscellaneous">
    <text evidence="1">This protein may be expected to contain an N-terminal transit peptide but none has been predicted.</text>
</comment>
<comment type="similarity">
    <text evidence="2">Belongs to the TRAFAC class translation factor GTPase superfamily. Classic translation factor GTPase family. LepA subfamily.</text>
</comment>
<proteinExistence type="inferred from homology"/>
<name>GUF1_CAEBR</name>
<organism>
    <name type="scientific">Caenorhabditis briggsae</name>
    <dbReference type="NCBI Taxonomy" id="6238"/>
    <lineage>
        <taxon>Eukaryota</taxon>
        <taxon>Metazoa</taxon>
        <taxon>Ecdysozoa</taxon>
        <taxon>Nematoda</taxon>
        <taxon>Chromadorea</taxon>
        <taxon>Rhabditida</taxon>
        <taxon>Rhabditina</taxon>
        <taxon>Rhabditomorpha</taxon>
        <taxon>Rhabditoidea</taxon>
        <taxon>Rhabditidae</taxon>
        <taxon>Peloderinae</taxon>
        <taxon>Caenorhabditis</taxon>
    </lineage>
</organism>
<gene>
    <name type="ORF">CBG18137</name>
</gene>
<reference key="1">
    <citation type="journal article" date="2003" name="PLoS Biol.">
        <title>The genome sequence of Caenorhabditis briggsae: a platform for comparative genomics.</title>
        <authorList>
            <person name="Stein L.D."/>
            <person name="Bao Z."/>
            <person name="Blasiar D."/>
            <person name="Blumenthal T."/>
            <person name="Brent M.R."/>
            <person name="Chen N."/>
            <person name="Chinwalla A."/>
            <person name="Clarke L."/>
            <person name="Clee C."/>
            <person name="Coghlan A."/>
            <person name="Coulson A."/>
            <person name="D'Eustachio P."/>
            <person name="Fitch D.H.A."/>
            <person name="Fulton L.A."/>
            <person name="Fulton R.E."/>
            <person name="Griffiths-Jones S."/>
            <person name="Harris T.W."/>
            <person name="Hillier L.W."/>
            <person name="Kamath R."/>
            <person name="Kuwabara P.E."/>
            <person name="Mardis E.R."/>
            <person name="Marra M.A."/>
            <person name="Miner T.L."/>
            <person name="Minx P."/>
            <person name="Mullikin J.C."/>
            <person name="Plumb R.W."/>
            <person name="Rogers J."/>
            <person name="Schein J.E."/>
            <person name="Sohrmann M."/>
            <person name="Spieth J."/>
            <person name="Stajich J.E."/>
            <person name="Wei C."/>
            <person name="Willey D."/>
            <person name="Wilson R.K."/>
            <person name="Durbin R.M."/>
            <person name="Waterston R.H."/>
        </authorList>
    </citation>
    <scope>NUCLEOTIDE SEQUENCE [LARGE SCALE GENOMIC DNA]</scope>
    <source>
        <strain>AF16</strain>
    </source>
</reference>
<accession>A8XT37</accession>
<evidence type="ECO:0000255" key="1">
    <source>
        <dbReference type="HAMAP-Rule" id="MF_03137"/>
    </source>
</evidence>
<evidence type="ECO:0000305" key="2"/>
<keyword id="KW-0342">GTP-binding</keyword>
<keyword id="KW-0378">Hydrolase</keyword>
<keyword id="KW-0472">Membrane</keyword>
<keyword id="KW-0496">Mitochondrion</keyword>
<keyword id="KW-0999">Mitochondrion inner membrane</keyword>
<keyword id="KW-0547">Nucleotide-binding</keyword>
<keyword id="KW-0648">Protein biosynthesis</keyword>
<keyword id="KW-1185">Reference proteome</keyword>